<name>MTL1_YEAST</name>
<protein>
    <recommendedName>
        <fullName>Protein MTL1</fullName>
    </recommendedName>
    <alternativeName>
        <fullName>MID two-like protein 1</fullName>
    </alternativeName>
</protein>
<accession>P53214</accession>
<accession>D6VUF7</accession>
<accession>Q45U60</accession>
<feature type="signal peptide" evidence="1">
    <location>
        <begin position="1"/>
        <end position="35"/>
    </location>
</feature>
<feature type="chain" id="PRO_0000202787" description="Protein MTL1">
    <location>
        <begin position="36"/>
        <end position="551"/>
    </location>
</feature>
<feature type="topological domain" description="Extracellular" evidence="1">
    <location>
        <begin position="36"/>
        <end position="361"/>
    </location>
</feature>
<feature type="transmembrane region" description="Helical" evidence="1">
    <location>
        <begin position="362"/>
        <end position="382"/>
    </location>
</feature>
<feature type="topological domain" description="Cytoplasmic" evidence="1">
    <location>
        <begin position="383"/>
        <end position="551"/>
    </location>
</feature>
<feature type="region of interest" description="Disordered" evidence="2">
    <location>
        <begin position="108"/>
        <end position="143"/>
    </location>
</feature>
<feature type="region of interest" description="Disordered" evidence="2">
    <location>
        <begin position="206"/>
        <end position="227"/>
    </location>
</feature>
<feature type="region of interest" description="Disordered" evidence="2">
    <location>
        <begin position="243"/>
        <end position="263"/>
    </location>
</feature>
<feature type="region of interest" description="Disordered" evidence="2">
    <location>
        <begin position="429"/>
        <end position="513"/>
    </location>
</feature>
<feature type="compositionally biased region" description="Polar residues" evidence="2">
    <location>
        <begin position="430"/>
        <end position="441"/>
    </location>
</feature>
<feature type="compositionally biased region" description="Acidic residues" evidence="2">
    <location>
        <begin position="466"/>
        <end position="477"/>
    </location>
</feature>
<feature type="compositionally biased region" description="Low complexity" evidence="2">
    <location>
        <begin position="498"/>
        <end position="508"/>
    </location>
</feature>
<feature type="modified residue" description="Phosphoserine" evidence="9">
    <location>
        <position position="481"/>
    </location>
</feature>
<feature type="modified residue" description="Phosphoserine" evidence="9">
    <location>
        <position position="482"/>
    </location>
</feature>
<feature type="sequence variant" description="In strain: ATCC 204278.">
    <original>S</original>
    <variation>SSSSSSSSSSISLSSSSSSSSSSSSSSSS</variation>
    <location>
        <position position="264"/>
    </location>
</feature>
<feature type="sequence variant" description="In strain: SK1." evidence="7">
    <original>R</original>
    <variation>K</variation>
    <location>
        <position position="427"/>
    </location>
</feature>
<keyword id="KW-0472">Membrane</keyword>
<keyword id="KW-0597">Phosphoprotein</keyword>
<keyword id="KW-1185">Reference proteome</keyword>
<keyword id="KW-0732">Signal</keyword>
<keyword id="KW-0346">Stress response</keyword>
<keyword id="KW-0812">Transmembrane</keyword>
<keyword id="KW-1133">Transmembrane helix</keyword>
<gene>
    <name type="primary">MTL1</name>
    <name type="ordered locus">YGR023W</name>
</gene>
<proteinExistence type="evidence at protein level"/>
<organism>
    <name type="scientific">Saccharomyces cerevisiae (strain ATCC 204508 / S288c)</name>
    <name type="common">Baker's yeast</name>
    <dbReference type="NCBI Taxonomy" id="559292"/>
    <lineage>
        <taxon>Eukaryota</taxon>
        <taxon>Fungi</taxon>
        <taxon>Dikarya</taxon>
        <taxon>Ascomycota</taxon>
        <taxon>Saccharomycotina</taxon>
        <taxon>Saccharomycetes</taxon>
        <taxon>Saccharomycetales</taxon>
        <taxon>Saccharomycetaceae</taxon>
        <taxon>Saccharomyces</taxon>
    </lineage>
</organism>
<reference key="1">
    <citation type="journal article" date="1999" name="Mol. Cell. Biol.">
        <title>Mid2 is a putative sensor for cell integrity signaling in Saccharomyces cerevisiae.</title>
        <authorList>
            <person name="Rajavel M."/>
            <person name="Philip B."/>
            <person name="Buehrer B.M."/>
            <person name="Errede B."/>
            <person name="Levin D.E."/>
        </authorList>
    </citation>
    <scope>NUCLEOTIDE SEQUENCE [GENOMIC DNA]</scope>
    <scope>FUNCTION</scope>
    <source>
        <strain>ATCC 204278 / EG123 / SM1058</strain>
    </source>
</reference>
<reference key="2">
    <citation type="journal article" date="1997" name="Yeast">
        <title>Sequence analysis of 203 kilobases from Saccharomyces cerevisiae chromosome VII.</title>
        <authorList>
            <person name="Rieger M."/>
            <person name="Brueckner M."/>
            <person name="Schaefer M."/>
            <person name="Mueller-Auer S."/>
        </authorList>
    </citation>
    <scope>NUCLEOTIDE SEQUENCE [GENOMIC DNA]</scope>
    <source>
        <strain>ATCC 204508 / S288c</strain>
    </source>
</reference>
<reference key="3">
    <citation type="journal article" date="1997" name="Nature">
        <title>The nucleotide sequence of Saccharomyces cerevisiae chromosome VII.</title>
        <authorList>
            <person name="Tettelin H."/>
            <person name="Agostoni-Carbone M.L."/>
            <person name="Albermann K."/>
            <person name="Albers M."/>
            <person name="Arroyo J."/>
            <person name="Backes U."/>
            <person name="Barreiros T."/>
            <person name="Bertani I."/>
            <person name="Bjourson A.J."/>
            <person name="Brueckner M."/>
            <person name="Bruschi C.V."/>
            <person name="Carignani G."/>
            <person name="Castagnoli L."/>
            <person name="Cerdan E."/>
            <person name="Clemente M.L."/>
            <person name="Coblenz A."/>
            <person name="Coglievina M."/>
            <person name="Coissac E."/>
            <person name="Defoor E."/>
            <person name="Del Bino S."/>
            <person name="Delius H."/>
            <person name="Delneri D."/>
            <person name="de Wergifosse P."/>
            <person name="Dujon B."/>
            <person name="Durand P."/>
            <person name="Entian K.-D."/>
            <person name="Eraso P."/>
            <person name="Escribano V."/>
            <person name="Fabiani L."/>
            <person name="Fartmann B."/>
            <person name="Feroli F."/>
            <person name="Feuermann M."/>
            <person name="Frontali L."/>
            <person name="Garcia-Gonzalez M."/>
            <person name="Garcia-Saez M.I."/>
            <person name="Goffeau A."/>
            <person name="Guerreiro P."/>
            <person name="Hani J."/>
            <person name="Hansen M."/>
            <person name="Hebling U."/>
            <person name="Hernandez K."/>
            <person name="Heumann K."/>
            <person name="Hilger F."/>
            <person name="Hofmann B."/>
            <person name="Indge K.J."/>
            <person name="James C.M."/>
            <person name="Klima R."/>
            <person name="Koetter P."/>
            <person name="Kramer B."/>
            <person name="Kramer W."/>
            <person name="Lauquin G."/>
            <person name="Leuther H."/>
            <person name="Louis E.J."/>
            <person name="Maillier E."/>
            <person name="Marconi A."/>
            <person name="Martegani E."/>
            <person name="Mazon M.J."/>
            <person name="Mazzoni C."/>
            <person name="McReynolds A.D.K."/>
            <person name="Melchioretto P."/>
            <person name="Mewes H.-W."/>
            <person name="Minenkova O."/>
            <person name="Mueller-Auer S."/>
            <person name="Nawrocki A."/>
            <person name="Netter P."/>
            <person name="Neu R."/>
            <person name="Nombela C."/>
            <person name="Oliver S.G."/>
            <person name="Panzeri L."/>
            <person name="Paoluzi S."/>
            <person name="Plevani P."/>
            <person name="Portetelle D."/>
            <person name="Portillo F."/>
            <person name="Potier S."/>
            <person name="Purnelle B."/>
            <person name="Rieger M."/>
            <person name="Riles L."/>
            <person name="Rinaldi T."/>
            <person name="Robben J."/>
            <person name="Rodrigues-Pousada C."/>
            <person name="Rodriguez-Belmonte E."/>
            <person name="Rodriguez-Torres A.M."/>
            <person name="Rose M."/>
            <person name="Ruzzi M."/>
            <person name="Saliola M."/>
            <person name="Sanchez-Perez M."/>
            <person name="Schaefer B."/>
            <person name="Schaefer M."/>
            <person name="Scharfe M."/>
            <person name="Schmidheini T."/>
            <person name="Schreer A."/>
            <person name="Skala J."/>
            <person name="Souciet J.-L."/>
            <person name="Steensma H.Y."/>
            <person name="Talla E."/>
            <person name="Thierry A."/>
            <person name="Vandenbol M."/>
            <person name="van der Aart Q.J.M."/>
            <person name="Van Dyck L."/>
            <person name="Vanoni M."/>
            <person name="Verhasselt P."/>
            <person name="Voet M."/>
            <person name="Volckaert G."/>
            <person name="Wambutt R."/>
            <person name="Watson M.D."/>
            <person name="Weber N."/>
            <person name="Wedler E."/>
            <person name="Wedler H."/>
            <person name="Wipfli P."/>
            <person name="Wolf K."/>
            <person name="Wright L.F."/>
            <person name="Zaccaria P."/>
            <person name="Zimmermann M."/>
            <person name="Zollner A."/>
            <person name="Kleine K."/>
        </authorList>
    </citation>
    <scope>NUCLEOTIDE SEQUENCE [LARGE SCALE GENOMIC DNA]</scope>
    <source>
        <strain>ATCC 204508 / S288c</strain>
    </source>
</reference>
<reference key="4">
    <citation type="journal article" date="2014" name="G3 (Bethesda)">
        <title>The reference genome sequence of Saccharomyces cerevisiae: Then and now.</title>
        <authorList>
            <person name="Engel S.R."/>
            <person name="Dietrich F.S."/>
            <person name="Fisk D.G."/>
            <person name="Binkley G."/>
            <person name="Balakrishnan R."/>
            <person name="Costanzo M.C."/>
            <person name="Dwight S.S."/>
            <person name="Hitz B.C."/>
            <person name="Karra K."/>
            <person name="Nash R.S."/>
            <person name="Weng S."/>
            <person name="Wong E.D."/>
            <person name="Lloyd P."/>
            <person name="Skrzypek M.S."/>
            <person name="Miyasato S.R."/>
            <person name="Simison M."/>
            <person name="Cherry J.M."/>
        </authorList>
    </citation>
    <scope>GENOME REANNOTATION</scope>
    <source>
        <strain>ATCC 204508 / S288c</strain>
    </source>
</reference>
<reference key="5">
    <citation type="journal article" date="2005" name="Nat. Genet.">
        <title>Quantitative trait loci mapped to single-nucleotide resolution in yeast.</title>
        <authorList>
            <person name="Deutschbauer A.M."/>
            <person name="Davis R.W."/>
        </authorList>
    </citation>
    <scope>NUCLEOTIDE SEQUENCE [GENOMIC DNA] OF 414-551</scope>
    <scope>VARIANT LYS-427</scope>
    <source>
        <strain>SK1</strain>
    </source>
</reference>
<reference key="6">
    <citation type="journal article" date="1999" name="J. Bacteriol.">
        <title>Saccharomyces cerevisiae mid2p is a potential cell wall stress sensor and upstream activator of the PKC1-MPK1 cell integrity pathway.</title>
        <authorList>
            <person name="Ketela T."/>
            <person name="Green R."/>
            <person name="Bussey H."/>
        </authorList>
    </citation>
    <scope>IDENTIFICATION</scope>
</reference>
<reference key="7">
    <citation type="journal article" date="2001" name="Genetics">
        <title>Overactivation of the protein kinase C-signaling pathway suppresses the defects of cells lacking the Rho3/Rho4-GAP Rgd1p in Saccharomyces cerevisiae.</title>
        <authorList>
            <person name="de Bettignies G."/>
            <person name="Thoraval D."/>
            <person name="Morel C."/>
            <person name="Peypouquet M.-F."/>
            <person name="Crouzet M."/>
        </authorList>
    </citation>
    <scope>FUNCTION</scope>
</reference>
<reference key="8">
    <citation type="journal article" date="2002" name="Genetics">
        <title>Dissection of upstream regulatory components of the Rho1p effector, 1,3-beta-glucan synthase, in Saccharomyces cerevisiae.</title>
        <authorList>
            <person name="Sekiya-Kawasaki M."/>
            <person name="Abe M."/>
            <person name="Saka A."/>
            <person name="Watanabe D."/>
            <person name="Kono K."/>
            <person name="Minemura-Asakawa M."/>
            <person name="Ishihara S."/>
            <person name="Watanabe T."/>
            <person name="Ohya Y."/>
        </authorList>
    </citation>
    <scope>FUNCTION</scope>
</reference>
<reference key="9">
    <citation type="journal article" date="2005" name="J. Biol. Chem.">
        <title>Pkc1 and the upstream elements of the cell integrity pathway in Saccharomyces cerevisiae, Rom2 and Mtl1, are required for cellular responses to oxidative stress.</title>
        <authorList>
            <person name="Vilella F."/>
            <person name="Herrero E."/>
            <person name="Torres J."/>
            <person name="de la Torre-Ruiz M.A."/>
        </authorList>
    </citation>
    <scope>FUNCTION</scope>
</reference>
<reference key="10">
    <citation type="journal article" date="2009" name="Science">
        <title>Global analysis of Cdk1 substrate phosphorylation sites provides insights into evolution.</title>
        <authorList>
            <person name="Holt L.J."/>
            <person name="Tuch B.B."/>
            <person name="Villen J."/>
            <person name="Johnson A.D."/>
            <person name="Gygi S.P."/>
            <person name="Morgan D.O."/>
        </authorList>
    </citation>
    <scope>PHOSPHORYLATION [LARGE SCALE ANALYSIS] AT SER-481 AND SER-482</scope>
    <scope>IDENTIFICATION BY MASS SPECTROMETRY [LARGE SCALE ANALYSIS]</scope>
</reference>
<evidence type="ECO:0000255" key="1"/>
<evidence type="ECO:0000256" key="2">
    <source>
        <dbReference type="SAM" id="MobiDB-lite"/>
    </source>
</evidence>
<evidence type="ECO:0000269" key="3">
    <source>
    </source>
</evidence>
<evidence type="ECO:0000269" key="4">
    <source>
    </source>
</evidence>
<evidence type="ECO:0000269" key="5">
    <source>
    </source>
</evidence>
<evidence type="ECO:0000269" key="6">
    <source>
    </source>
</evidence>
<evidence type="ECO:0000269" key="7">
    <source>
    </source>
</evidence>
<evidence type="ECO:0000305" key="8"/>
<evidence type="ECO:0007744" key="9">
    <source>
    </source>
</evidence>
<dbReference type="EMBL" id="Z72807">
    <property type="protein sequence ID" value="CAA97006.1"/>
    <property type="molecule type" value="Genomic_DNA"/>
</dbReference>
<dbReference type="EMBL" id="DQ115389">
    <property type="protein sequence ID" value="AAZ22486.1"/>
    <property type="molecule type" value="Genomic_DNA"/>
</dbReference>
<dbReference type="EMBL" id="BK006941">
    <property type="protein sequence ID" value="DAA08118.1"/>
    <property type="molecule type" value="Genomic_DNA"/>
</dbReference>
<dbReference type="PIR" id="S64314">
    <property type="entry name" value="S64314"/>
</dbReference>
<dbReference type="RefSeq" id="NP_011537.1">
    <property type="nucleotide sequence ID" value="NM_001181152.1"/>
</dbReference>
<dbReference type="SMR" id="P53214"/>
<dbReference type="BioGRID" id="33264">
    <property type="interactions" value="80"/>
</dbReference>
<dbReference type="DIP" id="DIP-5509N"/>
<dbReference type="FunCoup" id="P53214">
    <property type="interactions" value="138"/>
</dbReference>
<dbReference type="STRING" id="4932.YGR023W"/>
<dbReference type="GlyGen" id="P53214">
    <property type="glycosylation" value="1 site"/>
</dbReference>
<dbReference type="iPTMnet" id="P53214"/>
<dbReference type="PaxDb" id="4932-YGR023W"/>
<dbReference type="PeptideAtlas" id="P53214"/>
<dbReference type="EnsemblFungi" id="YGR023W_mRNA">
    <property type="protein sequence ID" value="YGR023W"/>
    <property type="gene ID" value="YGR023W"/>
</dbReference>
<dbReference type="GeneID" id="852905"/>
<dbReference type="KEGG" id="sce:YGR023W"/>
<dbReference type="AGR" id="SGD:S000003255"/>
<dbReference type="SGD" id="S000003255">
    <property type="gene designation" value="MTL1"/>
</dbReference>
<dbReference type="VEuPathDB" id="FungiDB:YGR023W"/>
<dbReference type="eggNOG" id="ENOG502S2SW">
    <property type="taxonomic scope" value="Eukaryota"/>
</dbReference>
<dbReference type="GeneTree" id="ENSGT00940000176476"/>
<dbReference type="HOGENOM" id="CLU_476680_0_0_1"/>
<dbReference type="InParanoid" id="P53214"/>
<dbReference type="OMA" id="LIYMFCV"/>
<dbReference type="OrthoDB" id="4070729at2759"/>
<dbReference type="BioCyc" id="YEAST:G3O-30748-MONOMER"/>
<dbReference type="BioGRID-ORCS" id="852905">
    <property type="hits" value="5 hits in 10 CRISPR screens"/>
</dbReference>
<dbReference type="PRO" id="PR:P53214"/>
<dbReference type="Proteomes" id="UP000002311">
    <property type="component" value="Chromosome VII"/>
</dbReference>
<dbReference type="RNAct" id="P53214">
    <property type="molecule type" value="protein"/>
</dbReference>
<dbReference type="GO" id="GO:0005886">
    <property type="term" value="C:plasma membrane"/>
    <property type="evidence" value="ECO:0000314"/>
    <property type="project" value="SGD"/>
</dbReference>
<dbReference type="GO" id="GO:0005773">
    <property type="term" value="C:vacuole"/>
    <property type="evidence" value="ECO:0007669"/>
    <property type="project" value="GOC"/>
</dbReference>
<dbReference type="GO" id="GO:0042149">
    <property type="term" value="P:cellular response to glucose starvation"/>
    <property type="evidence" value="ECO:0000315"/>
    <property type="project" value="SGD"/>
</dbReference>
<dbReference type="GO" id="GO:0034599">
    <property type="term" value="P:cellular response to oxidative stress"/>
    <property type="evidence" value="ECO:0000315"/>
    <property type="project" value="SGD"/>
</dbReference>
<dbReference type="GO" id="GO:0031505">
    <property type="term" value="P:fungal-type cell wall organization"/>
    <property type="evidence" value="ECO:0000315"/>
    <property type="project" value="SGD"/>
</dbReference>
<dbReference type="GO" id="GO:0007039">
    <property type="term" value="P:protein catabolic process in the vacuole"/>
    <property type="evidence" value="ECO:0000318"/>
    <property type="project" value="GO_Central"/>
</dbReference>
<dbReference type="InterPro" id="IPR051694">
    <property type="entry name" value="Immunoregulatory_rcpt-like"/>
</dbReference>
<dbReference type="InterPro" id="IPR007567">
    <property type="entry name" value="Mid2_dom"/>
</dbReference>
<dbReference type="PANTHER" id="PTHR15549:SF26">
    <property type="entry name" value="AXIAL BUDDING PATTERN PROTEIN 2-RELATED"/>
    <property type="match status" value="1"/>
</dbReference>
<dbReference type="PANTHER" id="PTHR15549">
    <property type="entry name" value="PAIRED IMMUNOGLOBULIN-LIKE TYPE 2 RECEPTOR"/>
    <property type="match status" value="1"/>
</dbReference>
<dbReference type="Pfam" id="PF04478">
    <property type="entry name" value="Mid2"/>
    <property type="match status" value="1"/>
</dbReference>
<comment type="function">
    <text evidence="3 4 5 6">Involved in cell integrity signaling during vegetative growth at elevated temperature. Acts positively on the PKC1-MAPK pathway. Cell membrane sensor of oxidative stress in the cell integrity pathway upstream of PKC1. Required to transmit the oxidative signal to SLT2 and to restore the correct actin organization following oxidative stress. Multicopy suppressor of 1,3-beta-glucan synthase (GS) mutation. Also suppresses RGD1 null mutations.</text>
</comment>
<comment type="subcellular location">
    <subcellularLocation>
        <location evidence="8">Membrane</location>
        <topology evidence="8">Single-pass type I membrane protein</topology>
    </subcellularLocation>
</comment>
<comment type="similarity">
    <text evidence="8">Belongs to the MID2 like cell wall stress sensor family.</text>
</comment>
<sequence>MASCNPTRKKSSASSLSMWRTILMALTTLPLSVLSQELVPANSTTSSTAPSITSLSAVESFTSSTDATSSASLSTPSIASVSFTSFPQSSSLLTLSSTLSSELSSSSMQVSSSSTSSSSSEVTSSSSSSSISPSSSSSTIISSSSSLPTFTVASTSSTVASSTLSTSSSLVISTSSSTFTFSSESSSSLISSSISTSVSTSSVYVPSSSTSSPPSSSSELTSSSYSSSSSSSTLFSYSSSFSSSSSSSSSSSSSSSSSSSSSSSYFTLSTSSSSSIYSSSSYPSFSSSSSSNPTSSITSTSASSSITPASEYSNLAKTITSIIEGQTILSNYYTTITYSPTASASSGKNSHHSGLSKKNRNIIIGCVVGIGAPLILILLILIYMFCVQPKKTDFIDSDGKIVTAYRSNIFTKIWYFLLGKKIGETERFSSDSPIGSNNIQNFGDIDPEDILNNDNPYTPKHTNVEGYDDDDDDDANDENLSSNFHNRGIDDQYSPTKSASYSMSNSNSQDYNDADEVMHDENIHRVYDDSEASIDENYYTKPNNGLNITNY</sequence>